<feature type="chain" id="PRO_1000138545" description="Orotidine 5'-phosphate decarboxylase">
    <location>
        <begin position="1"/>
        <end position="235"/>
    </location>
</feature>
<feature type="active site" description="Proton donor" evidence="1">
    <location>
        <position position="68"/>
    </location>
</feature>
<feature type="binding site" evidence="1">
    <location>
        <position position="17"/>
    </location>
    <ligand>
        <name>substrate</name>
    </ligand>
</feature>
<feature type="binding site" evidence="1">
    <location>
        <position position="39"/>
    </location>
    <ligand>
        <name>substrate</name>
    </ligand>
</feature>
<feature type="binding site" evidence="1">
    <location>
        <begin position="66"/>
        <end position="75"/>
    </location>
    <ligand>
        <name>substrate</name>
    </ligand>
</feature>
<feature type="binding site" evidence="1">
    <location>
        <position position="121"/>
    </location>
    <ligand>
        <name>substrate</name>
    </ligand>
</feature>
<feature type="binding site" evidence="1">
    <location>
        <position position="182"/>
    </location>
    <ligand>
        <name>substrate</name>
    </ligand>
</feature>
<feature type="binding site" evidence="1">
    <location>
        <position position="191"/>
    </location>
    <ligand>
        <name>substrate</name>
    </ligand>
</feature>
<feature type="binding site" evidence="1">
    <location>
        <position position="211"/>
    </location>
    <ligand>
        <name>substrate</name>
    </ligand>
</feature>
<feature type="binding site" evidence="1">
    <location>
        <position position="212"/>
    </location>
    <ligand>
        <name>substrate</name>
    </ligand>
</feature>
<protein>
    <recommendedName>
        <fullName evidence="1">Orotidine 5'-phosphate decarboxylase</fullName>
        <ecNumber evidence="1">4.1.1.23</ecNumber>
    </recommendedName>
    <alternativeName>
        <fullName evidence="1">OMP decarboxylase</fullName>
        <shortName evidence="1">OMPDCase</shortName>
        <shortName evidence="1">OMPdecase</shortName>
    </alternativeName>
</protein>
<evidence type="ECO:0000255" key="1">
    <source>
        <dbReference type="HAMAP-Rule" id="MF_01200"/>
    </source>
</evidence>
<keyword id="KW-0210">Decarboxylase</keyword>
<keyword id="KW-0456">Lyase</keyword>
<keyword id="KW-0665">Pyrimidine biosynthesis</keyword>
<keyword id="KW-1185">Reference proteome</keyword>
<comment type="function">
    <text evidence="1">Catalyzes the decarboxylation of orotidine 5'-monophosphate (OMP) to uridine 5'-monophosphate (UMP).</text>
</comment>
<comment type="catalytic activity">
    <reaction evidence="1">
        <text>orotidine 5'-phosphate + H(+) = UMP + CO2</text>
        <dbReference type="Rhea" id="RHEA:11596"/>
        <dbReference type="ChEBI" id="CHEBI:15378"/>
        <dbReference type="ChEBI" id="CHEBI:16526"/>
        <dbReference type="ChEBI" id="CHEBI:57538"/>
        <dbReference type="ChEBI" id="CHEBI:57865"/>
        <dbReference type="EC" id="4.1.1.23"/>
    </reaction>
</comment>
<comment type="pathway">
    <text evidence="1">Pyrimidine metabolism; UMP biosynthesis via de novo pathway; UMP from orotate: step 2/2.</text>
</comment>
<comment type="subunit">
    <text evidence="1">Homodimer.</text>
</comment>
<comment type="similarity">
    <text evidence="1">Belongs to the OMP decarboxylase family. Type 1 subfamily.</text>
</comment>
<accession>B6JCI7</accession>
<accession>F8BRD8</accession>
<reference key="1">
    <citation type="journal article" date="2008" name="J. Bacteriol.">
        <title>Genome sequence of the chemolithoautotrophic bacterium Oligotropha carboxidovorans OM5T.</title>
        <authorList>
            <person name="Paul D."/>
            <person name="Bridges S."/>
            <person name="Burgess S.C."/>
            <person name="Dandass Y."/>
            <person name="Lawrence M.L."/>
        </authorList>
    </citation>
    <scope>NUCLEOTIDE SEQUENCE [LARGE SCALE GENOMIC DNA]</scope>
    <source>
        <strain>ATCC 49405 / DSM 1227 / KCTC 32145 / OM5</strain>
    </source>
</reference>
<reference key="2">
    <citation type="journal article" date="2011" name="J. Bacteriol.">
        <title>Complete genome sequences of the chemolithoautotrophic Oligotropha carboxidovorans strains OM4 and OM5.</title>
        <authorList>
            <person name="Volland S."/>
            <person name="Rachinger M."/>
            <person name="Strittmatter A."/>
            <person name="Daniel R."/>
            <person name="Gottschalk G."/>
            <person name="Meyer O."/>
        </authorList>
    </citation>
    <scope>NUCLEOTIDE SEQUENCE [LARGE SCALE GENOMIC DNA]</scope>
    <source>
        <strain>ATCC 49405 / DSM 1227 / KCTC 32145 / OM5</strain>
    </source>
</reference>
<sequence length="235" mass="24135">MTQTPTNPRERLIVALDVPDVAQASKLVATLDDSVLFYKIGYQLAYAGGLSMAQDLIGAGKKVFIDLKLHDIGNTVASGVASIAKLGATFLTVHAYPQTMKAAVEASRGTGLKILAVTVLTSYDEADLKEAGYSLGVADLVAQRARQAQAIGIDGLVCSAEEAANLRAIVGEGLSLVTPGIRPAGSAVGDQKRVMTPARAIAAGADYLVVGRPIVAATDPKSAANAIVAEIAVAH</sequence>
<dbReference type="EC" id="4.1.1.23" evidence="1"/>
<dbReference type="EMBL" id="CP001196">
    <property type="protein sequence ID" value="ACI91567.1"/>
    <property type="molecule type" value="Genomic_DNA"/>
</dbReference>
<dbReference type="EMBL" id="CP002826">
    <property type="protein sequence ID" value="AEI04842.1"/>
    <property type="molecule type" value="Genomic_DNA"/>
</dbReference>
<dbReference type="RefSeq" id="WP_012561598.1">
    <property type="nucleotide sequence ID" value="NC_015684.1"/>
</dbReference>
<dbReference type="SMR" id="B6JCI7"/>
<dbReference type="STRING" id="504832.OCA5_c01100"/>
<dbReference type="KEGG" id="oca:OCAR_4421"/>
<dbReference type="KEGG" id="ocg:OCA5_c01100"/>
<dbReference type="PATRIC" id="fig|504832.7.peg.117"/>
<dbReference type="eggNOG" id="COG0284">
    <property type="taxonomic scope" value="Bacteria"/>
</dbReference>
<dbReference type="HOGENOM" id="CLU_067069_1_0_5"/>
<dbReference type="OrthoDB" id="9806203at2"/>
<dbReference type="UniPathway" id="UPA00070">
    <property type="reaction ID" value="UER00120"/>
</dbReference>
<dbReference type="Proteomes" id="UP000007730">
    <property type="component" value="Chromosome"/>
</dbReference>
<dbReference type="GO" id="GO:0005829">
    <property type="term" value="C:cytosol"/>
    <property type="evidence" value="ECO:0007669"/>
    <property type="project" value="TreeGrafter"/>
</dbReference>
<dbReference type="GO" id="GO:0004590">
    <property type="term" value="F:orotidine-5'-phosphate decarboxylase activity"/>
    <property type="evidence" value="ECO:0007669"/>
    <property type="project" value="UniProtKB-UniRule"/>
</dbReference>
<dbReference type="GO" id="GO:0006207">
    <property type="term" value="P:'de novo' pyrimidine nucleobase biosynthetic process"/>
    <property type="evidence" value="ECO:0007669"/>
    <property type="project" value="InterPro"/>
</dbReference>
<dbReference type="GO" id="GO:0044205">
    <property type="term" value="P:'de novo' UMP biosynthetic process"/>
    <property type="evidence" value="ECO:0007669"/>
    <property type="project" value="UniProtKB-UniRule"/>
</dbReference>
<dbReference type="CDD" id="cd04725">
    <property type="entry name" value="OMP_decarboxylase_like"/>
    <property type="match status" value="1"/>
</dbReference>
<dbReference type="FunFam" id="3.20.20.70:FF:000015">
    <property type="entry name" value="Orotidine 5'-phosphate decarboxylase"/>
    <property type="match status" value="1"/>
</dbReference>
<dbReference type="Gene3D" id="3.20.20.70">
    <property type="entry name" value="Aldolase class I"/>
    <property type="match status" value="1"/>
</dbReference>
<dbReference type="HAMAP" id="MF_01200_B">
    <property type="entry name" value="OMPdecase_type1_B"/>
    <property type="match status" value="1"/>
</dbReference>
<dbReference type="InterPro" id="IPR013785">
    <property type="entry name" value="Aldolase_TIM"/>
</dbReference>
<dbReference type="InterPro" id="IPR014732">
    <property type="entry name" value="OMPdecase"/>
</dbReference>
<dbReference type="InterPro" id="IPR018089">
    <property type="entry name" value="OMPdecase_AS"/>
</dbReference>
<dbReference type="InterPro" id="IPR047596">
    <property type="entry name" value="OMPdecase_bac"/>
</dbReference>
<dbReference type="InterPro" id="IPR001754">
    <property type="entry name" value="OMPdeCOase_dom"/>
</dbReference>
<dbReference type="InterPro" id="IPR011060">
    <property type="entry name" value="RibuloseP-bd_barrel"/>
</dbReference>
<dbReference type="NCBIfam" id="NF001273">
    <property type="entry name" value="PRK00230.1"/>
    <property type="match status" value="1"/>
</dbReference>
<dbReference type="NCBIfam" id="TIGR01740">
    <property type="entry name" value="pyrF"/>
    <property type="match status" value="1"/>
</dbReference>
<dbReference type="PANTHER" id="PTHR32119">
    <property type="entry name" value="OROTIDINE 5'-PHOSPHATE DECARBOXYLASE"/>
    <property type="match status" value="1"/>
</dbReference>
<dbReference type="PANTHER" id="PTHR32119:SF2">
    <property type="entry name" value="OROTIDINE 5'-PHOSPHATE DECARBOXYLASE"/>
    <property type="match status" value="1"/>
</dbReference>
<dbReference type="Pfam" id="PF00215">
    <property type="entry name" value="OMPdecase"/>
    <property type="match status" value="1"/>
</dbReference>
<dbReference type="SMART" id="SM00934">
    <property type="entry name" value="OMPdecase"/>
    <property type="match status" value="1"/>
</dbReference>
<dbReference type="SUPFAM" id="SSF51366">
    <property type="entry name" value="Ribulose-phoshate binding barrel"/>
    <property type="match status" value="1"/>
</dbReference>
<dbReference type="PROSITE" id="PS00156">
    <property type="entry name" value="OMPDECASE"/>
    <property type="match status" value="1"/>
</dbReference>
<proteinExistence type="inferred from homology"/>
<organism>
    <name type="scientific">Afipia carboxidovorans (strain ATCC 49405 / DSM 1227 / KCTC 32145 / OM5)</name>
    <name type="common">Oligotropha carboxidovorans</name>
    <dbReference type="NCBI Taxonomy" id="504832"/>
    <lineage>
        <taxon>Bacteria</taxon>
        <taxon>Pseudomonadati</taxon>
        <taxon>Pseudomonadota</taxon>
        <taxon>Alphaproteobacteria</taxon>
        <taxon>Hyphomicrobiales</taxon>
        <taxon>Nitrobacteraceae</taxon>
        <taxon>Afipia</taxon>
    </lineage>
</organism>
<gene>
    <name evidence="1" type="primary">pyrF</name>
    <name type="ordered locus">OCAR_4421</name>
    <name type="ordered locus">OCA5_c01100</name>
</gene>
<name>PYRF_AFIC5</name>